<keyword id="KW-0963">Cytoplasm</keyword>
<keyword id="KW-0539">Nucleus</keyword>
<keyword id="KW-1185">Reference proteome</keyword>
<keyword id="KW-0736">Signalosome</keyword>
<dbReference type="EMBL" id="AE016820">
    <property type="protein sequence ID" value="AAS54355.1"/>
    <property type="molecule type" value="Genomic_DNA"/>
</dbReference>
<dbReference type="RefSeq" id="NP_986531.1">
    <property type="nucleotide sequence ID" value="NM_211593.1"/>
</dbReference>
<dbReference type="SMR" id="Q750S5"/>
<dbReference type="FunCoup" id="Q750S5">
    <property type="interactions" value="89"/>
</dbReference>
<dbReference type="STRING" id="284811.Q750S5"/>
<dbReference type="EnsemblFungi" id="AAS54355">
    <property type="protein sequence ID" value="AAS54355"/>
    <property type="gene ID" value="AGOS_AGL136C"/>
</dbReference>
<dbReference type="GeneID" id="4622830"/>
<dbReference type="KEGG" id="ago:AGOS_AGL136C"/>
<dbReference type="eggNOG" id="ENOG502S4AD">
    <property type="taxonomic scope" value="Eukaryota"/>
</dbReference>
<dbReference type="HOGENOM" id="CLU_138722_0_0_1"/>
<dbReference type="InParanoid" id="Q750S5"/>
<dbReference type="OMA" id="FDCRDVY"/>
<dbReference type="OrthoDB" id="10265275at2759"/>
<dbReference type="Proteomes" id="UP000000591">
    <property type="component" value="Chromosome VII"/>
</dbReference>
<dbReference type="GO" id="GO:0008180">
    <property type="term" value="C:COP9 signalosome"/>
    <property type="evidence" value="ECO:0007669"/>
    <property type="project" value="UniProtKB-KW"/>
</dbReference>
<dbReference type="GO" id="GO:0005737">
    <property type="term" value="C:cytoplasm"/>
    <property type="evidence" value="ECO:0007669"/>
    <property type="project" value="UniProtKB-SubCell"/>
</dbReference>
<dbReference type="GO" id="GO:0071444">
    <property type="term" value="P:cellular response to pheromone"/>
    <property type="evidence" value="ECO:0007669"/>
    <property type="project" value="EnsemblFungi"/>
</dbReference>
<dbReference type="GO" id="GO:0000747">
    <property type="term" value="P:conjugation with cellular fusion"/>
    <property type="evidence" value="ECO:0007669"/>
    <property type="project" value="EnsemblFungi"/>
</dbReference>
<dbReference type="GO" id="GO:0000338">
    <property type="term" value="P:protein deneddylation"/>
    <property type="evidence" value="ECO:0007669"/>
    <property type="project" value="EnsemblFungi"/>
</dbReference>
<dbReference type="InterPro" id="IPR016806">
    <property type="entry name" value="Csn9_fungi"/>
</dbReference>
<dbReference type="PIRSF" id="PIRSF022632">
    <property type="entry name" value="UCP022632"/>
    <property type="match status" value="1"/>
</dbReference>
<accession>Q750S5</accession>
<feature type="chain" id="PRO_0000121017" description="COP9 signalosome complex subunit 9">
    <location>
        <begin position="1"/>
        <end position="163"/>
    </location>
</feature>
<feature type="domain" description="PCI">
    <location>
        <begin position="5"/>
        <end position="120"/>
    </location>
</feature>
<reference key="1">
    <citation type="journal article" date="2004" name="Science">
        <title>The Ashbya gossypii genome as a tool for mapping the ancient Saccharomyces cerevisiae genome.</title>
        <authorList>
            <person name="Dietrich F.S."/>
            <person name="Voegeli S."/>
            <person name="Brachat S."/>
            <person name="Lerch A."/>
            <person name="Gates K."/>
            <person name="Steiner S."/>
            <person name="Mohr C."/>
            <person name="Poehlmann R."/>
            <person name="Luedi P."/>
            <person name="Choi S."/>
            <person name="Wing R.A."/>
            <person name="Flavier A."/>
            <person name="Gaffney T.D."/>
            <person name="Philippsen P."/>
        </authorList>
    </citation>
    <scope>NUCLEOTIDE SEQUENCE [LARGE SCALE GENOMIC DNA]</scope>
    <source>
        <strain>ATCC 10895 / CBS 109.51 / FGSC 9923 / NRRL Y-1056</strain>
    </source>
</reference>
<reference key="2">
    <citation type="journal article" date="2013" name="G3 (Bethesda)">
        <title>Genomes of Ashbya fungi isolated from insects reveal four mating-type loci, numerous translocations, lack of transposons, and distinct gene duplications.</title>
        <authorList>
            <person name="Dietrich F.S."/>
            <person name="Voegeli S."/>
            <person name="Kuo S."/>
            <person name="Philippsen P."/>
        </authorList>
    </citation>
    <scope>GENOME REANNOTATION</scope>
    <source>
        <strain>ATCC 10895 / CBS 109.51 / FGSC 9923 / NRRL Y-1056</strain>
    </source>
</reference>
<gene>
    <name type="primary">CSN9</name>
    <name type="ordered locus">AGL136C</name>
</gene>
<evidence type="ECO:0000250" key="1"/>
<name>CSN9_EREGS</name>
<organism>
    <name type="scientific">Eremothecium gossypii (strain ATCC 10895 / CBS 109.51 / FGSC 9923 / NRRL Y-1056)</name>
    <name type="common">Yeast</name>
    <name type="synonym">Ashbya gossypii</name>
    <dbReference type="NCBI Taxonomy" id="284811"/>
    <lineage>
        <taxon>Eukaryota</taxon>
        <taxon>Fungi</taxon>
        <taxon>Dikarya</taxon>
        <taxon>Ascomycota</taxon>
        <taxon>Saccharomycotina</taxon>
        <taxon>Saccharomycetes</taxon>
        <taxon>Saccharomycetales</taxon>
        <taxon>Saccharomycetaceae</taxon>
        <taxon>Eremothecium</taxon>
    </lineage>
</organism>
<comment type="function">
    <text evidence="1">Component of the COP9 signalosome (CSN) complex that acts as a regulator of the ubiquitin (Ubl) conjugation pathway by mediating the deneddylation of the cullin subunit of SCF-type E3 ubiquitin-protein ligase complexes. The complex is involved in the regulation of the mating pheromone response (By similarity).</text>
</comment>
<comment type="subunit">
    <text>Component of a COP9 signalosome-like (CSN) complex.</text>
</comment>
<comment type="subcellular location">
    <subcellularLocation>
        <location evidence="1">Cytoplasm</location>
    </subcellularLocation>
    <subcellularLocation>
        <location evidence="1">Nucleus</location>
    </subcellularLocation>
</comment>
<proteinExistence type="inferred from homology"/>
<sequence length="163" mass="18848">MIRQEVLHAVLDPKAVHFKQFWLSSVDRDESELLEVLCFGNYGDLNAIQSCEEWKDAIESKLRTLTLLGLCEVPSELEYDQAMASCCIPDDVILEQRMVELQAQVHFQLDSVGRRIKVLRCLGARDIYNGERPLLLLRDAARSRESTLAGLRQWKQKLQYQLR</sequence>
<protein>
    <recommendedName>
        <fullName>COP9 signalosome complex subunit 9</fullName>
    </recommendedName>
</protein>